<protein>
    <recommendedName>
        <fullName>SH2 domain-containing protein 4A</fullName>
    </recommendedName>
</protein>
<comment type="function">
    <text evidence="1 6">Inhibits estrogen-induced cell proliferation by competing with PLCG for binding to ESR1, blocking the effect of estrogen on PLCG and repressing estrogen-induced proliferation (By similarity). May play a role in T-cell development and function.</text>
</comment>
<comment type="subunit">
    <text evidence="1">Interacts with ESR1.</text>
</comment>
<comment type="subcellular location">
    <subcellularLocation>
        <location evidence="5">Cytoplasm</location>
    </subcellularLocation>
    <text>Located at podocyte foot processes.</text>
</comment>
<comment type="tissue specificity">
    <text evidence="5 6">In the kidney, expressed only in the glomerulus. Expressed in T-cells, B-cells, macrophages and dendritic cells (at protein level). In adult, highest levels are found in muscle and lung with lower levels in kidney.</text>
</comment>
<comment type="induction">
    <text evidence="6">Upon CD3/CD28 stimulation in CD4 T-cells.</text>
</comment>
<reference key="1">
    <citation type="journal article" date="2005" name="Science">
        <title>The transcriptional landscape of the mammalian genome.</title>
        <authorList>
            <person name="Carninci P."/>
            <person name="Kasukawa T."/>
            <person name="Katayama S."/>
            <person name="Gough J."/>
            <person name="Frith M.C."/>
            <person name="Maeda N."/>
            <person name="Oyama R."/>
            <person name="Ravasi T."/>
            <person name="Lenhard B."/>
            <person name="Wells C."/>
            <person name="Kodzius R."/>
            <person name="Shimokawa K."/>
            <person name="Bajic V.B."/>
            <person name="Brenner S.E."/>
            <person name="Batalov S."/>
            <person name="Forrest A.R."/>
            <person name="Zavolan M."/>
            <person name="Davis M.J."/>
            <person name="Wilming L.G."/>
            <person name="Aidinis V."/>
            <person name="Allen J.E."/>
            <person name="Ambesi-Impiombato A."/>
            <person name="Apweiler R."/>
            <person name="Aturaliya R.N."/>
            <person name="Bailey T.L."/>
            <person name="Bansal M."/>
            <person name="Baxter L."/>
            <person name="Beisel K.W."/>
            <person name="Bersano T."/>
            <person name="Bono H."/>
            <person name="Chalk A.M."/>
            <person name="Chiu K.P."/>
            <person name="Choudhary V."/>
            <person name="Christoffels A."/>
            <person name="Clutterbuck D.R."/>
            <person name="Crowe M.L."/>
            <person name="Dalla E."/>
            <person name="Dalrymple B.P."/>
            <person name="de Bono B."/>
            <person name="Della Gatta G."/>
            <person name="di Bernardo D."/>
            <person name="Down T."/>
            <person name="Engstrom P."/>
            <person name="Fagiolini M."/>
            <person name="Faulkner G."/>
            <person name="Fletcher C.F."/>
            <person name="Fukushima T."/>
            <person name="Furuno M."/>
            <person name="Futaki S."/>
            <person name="Gariboldi M."/>
            <person name="Georgii-Hemming P."/>
            <person name="Gingeras T.R."/>
            <person name="Gojobori T."/>
            <person name="Green R.E."/>
            <person name="Gustincich S."/>
            <person name="Harbers M."/>
            <person name="Hayashi Y."/>
            <person name="Hensch T.K."/>
            <person name="Hirokawa N."/>
            <person name="Hill D."/>
            <person name="Huminiecki L."/>
            <person name="Iacono M."/>
            <person name="Ikeo K."/>
            <person name="Iwama A."/>
            <person name="Ishikawa T."/>
            <person name="Jakt M."/>
            <person name="Kanapin A."/>
            <person name="Katoh M."/>
            <person name="Kawasawa Y."/>
            <person name="Kelso J."/>
            <person name="Kitamura H."/>
            <person name="Kitano H."/>
            <person name="Kollias G."/>
            <person name="Krishnan S.P."/>
            <person name="Kruger A."/>
            <person name="Kummerfeld S.K."/>
            <person name="Kurochkin I.V."/>
            <person name="Lareau L.F."/>
            <person name="Lazarevic D."/>
            <person name="Lipovich L."/>
            <person name="Liu J."/>
            <person name="Liuni S."/>
            <person name="McWilliam S."/>
            <person name="Madan Babu M."/>
            <person name="Madera M."/>
            <person name="Marchionni L."/>
            <person name="Matsuda H."/>
            <person name="Matsuzawa S."/>
            <person name="Miki H."/>
            <person name="Mignone F."/>
            <person name="Miyake S."/>
            <person name="Morris K."/>
            <person name="Mottagui-Tabar S."/>
            <person name="Mulder N."/>
            <person name="Nakano N."/>
            <person name="Nakauchi H."/>
            <person name="Ng P."/>
            <person name="Nilsson R."/>
            <person name="Nishiguchi S."/>
            <person name="Nishikawa S."/>
            <person name="Nori F."/>
            <person name="Ohara O."/>
            <person name="Okazaki Y."/>
            <person name="Orlando V."/>
            <person name="Pang K.C."/>
            <person name="Pavan W.J."/>
            <person name="Pavesi G."/>
            <person name="Pesole G."/>
            <person name="Petrovsky N."/>
            <person name="Piazza S."/>
            <person name="Reed J."/>
            <person name="Reid J.F."/>
            <person name="Ring B.Z."/>
            <person name="Ringwald M."/>
            <person name="Rost B."/>
            <person name="Ruan Y."/>
            <person name="Salzberg S.L."/>
            <person name="Sandelin A."/>
            <person name="Schneider C."/>
            <person name="Schoenbach C."/>
            <person name="Sekiguchi K."/>
            <person name="Semple C.A."/>
            <person name="Seno S."/>
            <person name="Sessa L."/>
            <person name="Sheng Y."/>
            <person name="Shibata Y."/>
            <person name="Shimada H."/>
            <person name="Shimada K."/>
            <person name="Silva D."/>
            <person name="Sinclair B."/>
            <person name="Sperling S."/>
            <person name="Stupka E."/>
            <person name="Sugiura K."/>
            <person name="Sultana R."/>
            <person name="Takenaka Y."/>
            <person name="Taki K."/>
            <person name="Tammoja K."/>
            <person name="Tan S.L."/>
            <person name="Tang S."/>
            <person name="Taylor M.S."/>
            <person name="Tegner J."/>
            <person name="Teichmann S.A."/>
            <person name="Ueda H.R."/>
            <person name="van Nimwegen E."/>
            <person name="Verardo R."/>
            <person name="Wei C.L."/>
            <person name="Yagi K."/>
            <person name="Yamanishi H."/>
            <person name="Zabarovsky E."/>
            <person name="Zhu S."/>
            <person name="Zimmer A."/>
            <person name="Hide W."/>
            <person name="Bult C."/>
            <person name="Grimmond S.M."/>
            <person name="Teasdale R.D."/>
            <person name="Liu E.T."/>
            <person name="Brusic V."/>
            <person name="Quackenbush J."/>
            <person name="Wahlestedt C."/>
            <person name="Mattick J.S."/>
            <person name="Hume D.A."/>
            <person name="Kai C."/>
            <person name="Sasaki D."/>
            <person name="Tomaru Y."/>
            <person name="Fukuda S."/>
            <person name="Kanamori-Katayama M."/>
            <person name="Suzuki M."/>
            <person name="Aoki J."/>
            <person name="Arakawa T."/>
            <person name="Iida J."/>
            <person name="Imamura K."/>
            <person name="Itoh M."/>
            <person name="Kato T."/>
            <person name="Kawaji H."/>
            <person name="Kawagashira N."/>
            <person name="Kawashima T."/>
            <person name="Kojima M."/>
            <person name="Kondo S."/>
            <person name="Konno H."/>
            <person name="Nakano K."/>
            <person name="Ninomiya N."/>
            <person name="Nishio T."/>
            <person name="Okada M."/>
            <person name="Plessy C."/>
            <person name="Shibata K."/>
            <person name="Shiraki T."/>
            <person name="Suzuki S."/>
            <person name="Tagami M."/>
            <person name="Waki K."/>
            <person name="Watahiki A."/>
            <person name="Okamura-Oho Y."/>
            <person name="Suzuki H."/>
            <person name="Kawai J."/>
            <person name="Hayashizaki Y."/>
        </authorList>
    </citation>
    <scope>NUCLEOTIDE SEQUENCE [LARGE SCALE MRNA]</scope>
    <source>
        <strain>C57BL/6J</strain>
        <tissue>Stomach</tissue>
    </source>
</reference>
<reference key="2">
    <citation type="journal article" date="2004" name="Genome Res.">
        <title>The status, quality, and expansion of the NIH full-length cDNA project: the Mammalian Gene Collection (MGC).</title>
        <authorList>
            <consortium name="The MGC Project Team"/>
        </authorList>
    </citation>
    <scope>NUCLEOTIDE SEQUENCE [LARGE SCALE MRNA]</scope>
</reference>
<reference key="3">
    <citation type="journal article" date="2007" name="J. Am. Soc. Nephrol.">
        <title>Expression and subcellular distribution of novel glomerulus-associated proteins Dendrin, Ehd3, Sh2d4a, Plekhh2, and 2310066E14Rik.</title>
        <authorList>
            <person name="Patrakka J."/>
            <person name="Xiao Z."/>
            <person name="Nukui M."/>
            <person name="Takemoto M."/>
            <person name="He L."/>
            <person name="Oddsson A."/>
            <person name="Perisic L."/>
            <person name="Kaukinen A."/>
            <person name="Szigyarto C.A.-K."/>
            <person name="Uhlen M."/>
            <person name="Jalanko H."/>
            <person name="Betsholtz C."/>
            <person name="Tryggvason K."/>
        </authorList>
    </citation>
    <scope>SUBCELLULAR LOCATION</scope>
    <scope>TISSUE SPECIFICITY</scope>
</reference>
<reference key="4">
    <citation type="journal article" date="2008" name="J. Immunol.">
        <title>Genetic analysis of SH2D4A, a novel adapter protein related to T cell-specific adapter and adapter protein in lymphocytes of unknown function, reveals a redundant function in T cells.</title>
        <authorList>
            <person name="Lapinski P.E."/>
            <person name="Oliver J.A."/>
            <person name="Kamen L.A."/>
            <person name="Hughes E.D."/>
            <person name="Saunders T.L."/>
            <person name="King P.D."/>
        </authorList>
    </citation>
    <scope>FUNCTION</scope>
    <scope>TISSUE SPECIFICITY</scope>
    <scope>INDUCTION</scope>
</reference>
<reference key="5">
    <citation type="journal article" date="2010" name="Cell">
        <title>A tissue-specific atlas of mouse protein phosphorylation and expression.</title>
        <authorList>
            <person name="Huttlin E.L."/>
            <person name="Jedrychowski M.P."/>
            <person name="Elias J.E."/>
            <person name="Goswami T."/>
            <person name="Rad R."/>
            <person name="Beausoleil S.A."/>
            <person name="Villen J."/>
            <person name="Haas W."/>
            <person name="Sowa M.E."/>
            <person name="Gygi S.P."/>
        </authorList>
    </citation>
    <scope>PHOSPHORYLATION [LARGE SCALE ANALYSIS] AT SER-117</scope>
    <scope>IDENTIFICATION BY MASS SPECTROMETRY [LARGE SCALE ANALYSIS]</scope>
    <source>
        <tissue>Lung</tissue>
        <tissue>Pancreas</tissue>
        <tissue>Spleen</tissue>
    </source>
</reference>
<dbReference type="EMBL" id="AK008803">
    <property type="protein sequence ID" value="BAB25905.1"/>
    <property type="molecule type" value="mRNA"/>
</dbReference>
<dbReference type="EMBL" id="BC116682">
    <property type="protein sequence ID" value="AAI16683.1"/>
    <property type="molecule type" value="mRNA"/>
</dbReference>
<dbReference type="CCDS" id="CCDS52564.1"/>
<dbReference type="RefSeq" id="NP_082458.1">
    <property type="nucleotide sequence ID" value="NM_028182.1"/>
</dbReference>
<dbReference type="RefSeq" id="XP_006509814.1">
    <property type="nucleotide sequence ID" value="XM_006509751.4"/>
</dbReference>
<dbReference type="SMR" id="Q9D7V1"/>
<dbReference type="FunCoup" id="Q9D7V1">
    <property type="interactions" value="668"/>
</dbReference>
<dbReference type="STRING" id="10090.ENSMUSP00000070825"/>
<dbReference type="GlyGen" id="Q9D7V1">
    <property type="glycosylation" value="1 site, 1 O-linked glycan (1 site)"/>
</dbReference>
<dbReference type="iPTMnet" id="Q9D7V1"/>
<dbReference type="PhosphoSitePlus" id="Q9D7V1"/>
<dbReference type="PaxDb" id="10090-ENSMUSP00000070825"/>
<dbReference type="PeptideAtlas" id="Q9D7V1"/>
<dbReference type="ProteomicsDB" id="261209"/>
<dbReference type="Antibodypedia" id="968">
    <property type="antibodies" value="220 antibodies from 32 providers"/>
</dbReference>
<dbReference type="Ensembl" id="ENSMUST00000066594.4">
    <property type="protein sequence ID" value="ENSMUSP00000070825.4"/>
    <property type="gene ID" value="ENSMUSG00000053886.5"/>
</dbReference>
<dbReference type="GeneID" id="72281"/>
<dbReference type="KEGG" id="mmu:72281"/>
<dbReference type="UCSC" id="uc009lwe.2">
    <property type="organism name" value="mouse"/>
</dbReference>
<dbReference type="AGR" id="MGI:1919531"/>
<dbReference type="CTD" id="63898"/>
<dbReference type="MGI" id="MGI:1919531">
    <property type="gene designation" value="Sh2d4a"/>
</dbReference>
<dbReference type="VEuPathDB" id="HostDB:ENSMUSG00000053886"/>
<dbReference type="eggNOG" id="ENOG502QVV5">
    <property type="taxonomic scope" value="Eukaryota"/>
</dbReference>
<dbReference type="GeneTree" id="ENSGT00940000157357"/>
<dbReference type="HOGENOM" id="CLU_029296_1_0_1"/>
<dbReference type="InParanoid" id="Q9D7V1"/>
<dbReference type="OMA" id="NRMKTYG"/>
<dbReference type="OrthoDB" id="10003345at2759"/>
<dbReference type="PhylomeDB" id="Q9D7V1"/>
<dbReference type="TreeFam" id="TF336893"/>
<dbReference type="BioGRID-ORCS" id="72281">
    <property type="hits" value="1 hit in 76 CRISPR screens"/>
</dbReference>
<dbReference type="ChiTaRS" id="Sh2d4a">
    <property type="organism name" value="mouse"/>
</dbReference>
<dbReference type="PRO" id="PR:Q9D7V1"/>
<dbReference type="Proteomes" id="UP000000589">
    <property type="component" value="Chromosome 8"/>
</dbReference>
<dbReference type="RNAct" id="Q9D7V1">
    <property type="molecule type" value="protein"/>
</dbReference>
<dbReference type="Bgee" id="ENSMUSG00000053886">
    <property type="expression patterns" value="Expressed in epithelium of stomach and 163 other cell types or tissues"/>
</dbReference>
<dbReference type="ExpressionAtlas" id="Q9D7V1">
    <property type="expression patterns" value="baseline and differential"/>
</dbReference>
<dbReference type="GO" id="GO:0005737">
    <property type="term" value="C:cytoplasm"/>
    <property type="evidence" value="ECO:0000314"/>
    <property type="project" value="UniProtKB"/>
</dbReference>
<dbReference type="GO" id="GO:0005829">
    <property type="term" value="C:cytosol"/>
    <property type="evidence" value="ECO:0007669"/>
    <property type="project" value="Ensembl"/>
</dbReference>
<dbReference type="GO" id="GO:0019902">
    <property type="term" value="F:phosphatase binding"/>
    <property type="evidence" value="ECO:0000250"/>
    <property type="project" value="UniProtKB"/>
</dbReference>
<dbReference type="CDD" id="cd10350">
    <property type="entry name" value="SH2_SH2D4A"/>
    <property type="match status" value="1"/>
</dbReference>
<dbReference type="FunFam" id="3.30.505.10:FF:000034">
    <property type="entry name" value="SH2 domain-containing protein 4A"/>
    <property type="match status" value="1"/>
</dbReference>
<dbReference type="Gene3D" id="3.30.505.10">
    <property type="entry name" value="SH2 domain"/>
    <property type="match status" value="1"/>
</dbReference>
<dbReference type="InterPro" id="IPR000980">
    <property type="entry name" value="SH2"/>
</dbReference>
<dbReference type="InterPro" id="IPR036860">
    <property type="entry name" value="SH2_dom_sf"/>
</dbReference>
<dbReference type="PANTHER" id="PTHR14388:SF5">
    <property type="entry name" value="SH2 DOMAIN-CONTAINING PROTEIN 4A"/>
    <property type="match status" value="1"/>
</dbReference>
<dbReference type="PANTHER" id="PTHR14388">
    <property type="entry name" value="T CELL-SPECIFIC ADAPTER PROTEIN TSAD"/>
    <property type="match status" value="1"/>
</dbReference>
<dbReference type="Pfam" id="PF00017">
    <property type="entry name" value="SH2"/>
    <property type="match status" value="1"/>
</dbReference>
<dbReference type="PRINTS" id="PR00401">
    <property type="entry name" value="SH2DOMAIN"/>
</dbReference>
<dbReference type="SMART" id="SM00252">
    <property type="entry name" value="SH2"/>
    <property type="match status" value="1"/>
</dbReference>
<dbReference type="SUPFAM" id="SSF55550">
    <property type="entry name" value="SH2 domain"/>
    <property type="match status" value="1"/>
</dbReference>
<dbReference type="PROSITE" id="PS50001">
    <property type="entry name" value="SH2"/>
    <property type="match status" value="1"/>
</dbReference>
<feature type="chain" id="PRO_0000233134" description="SH2 domain-containing protein 4A">
    <location>
        <begin position="1"/>
        <end position="421"/>
    </location>
</feature>
<feature type="domain" description="SH2" evidence="3">
    <location>
        <begin position="315"/>
        <end position="407"/>
    </location>
</feature>
<feature type="region of interest" description="Disordered" evidence="4">
    <location>
        <begin position="132"/>
        <end position="271"/>
    </location>
</feature>
<feature type="compositionally biased region" description="Basic and acidic residues" evidence="4">
    <location>
        <begin position="163"/>
        <end position="201"/>
    </location>
</feature>
<feature type="compositionally biased region" description="Basic and acidic residues" evidence="4">
    <location>
        <begin position="211"/>
        <end position="230"/>
    </location>
</feature>
<feature type="modified residue" description="Phosphoserine" evidence="8">
    <location>
        <position position="117"/>
    </location>
</feature>
<feature type="modified residue" description="Phosphoserine" evidence="2">
    <location>
        <position position="123"/>
    </location>
</feature>
<feature type="modified residue" description="Phosphoserine" evidence="2">
    <location>
        <position position="232"/>
    </location>
</feature>
<feature type="sequence conflict" description="In Ref. 2; AAI16683." evidence="7" ref="2">
    <original>I</original>
    <variation>T</variation>
    <location>
        <position position="283"/>
    </location>
</feature>
<evidence type="ECO:0000250" key="1"/>
<evidence type="ECO:0000250" key="2">
    <source>
        <dbReference type="UniProtKB" id="Q9H788"/>
    </source>
</evidence>
<evidence type="ECO:0000255" key="3">
    <source>
        <dbReference type="PROSITE-ProRule" id="PRU00191"/>
    </source>
</evidence>
<evidence type="ECO:0000256" key="4">
    <source>
        <dbReference type="SAM" id="MobiDB-lite"/>
    </source>
</evidence>
<evidence type="ECO:0000269" key="5">
    <source>
    </source>
</evidence>
<evidence type="ECO:0000269" key="6">
    <source>
    </source>
</evidence>
<evidence type="ECO:0000305" key="7"/>
<evidence type="ECO:0007744" key="8">
    <source>
    </source>
</evidence>
<sequence>MLRQILSDMFIDPDLLAELSEEQKQILFYKMREEQIRRWKEREAAMERKESLPVKSRPKKENGKSVHWKLGADKQVWVWVMGEHHLDKPYDVLCDEILAEREHLRAAKDSELRKTQSLELANSLKIKSQNCDLQAMKKTEPQNVTRKAASEEASGQGPRAIPTRKDDKAQTKPVKEKDHEEMKQTEDEKTKQIYKSWKEDSEWQASLRKSKAADEKRRSLAKQAREDYKRLSQRGRSGDGLQNPLTGPQKPRRPPLPPKPQFLQPLGIPPKSLGNQGVIRTEISSAQMDTIRWFKEEQLPFRAGYQKNSDTIAPWFHGILTLKKANELLSTGVPGSFLIRVSEKIKGYALSYLSEEGCKHFLIDASANSYSFLGVDQLQHATLADLVEYHKEEPITSLGKELLLYPCGQQDKLPDYLELFQ</sequence>
<accession>Q9D7V1</accession>
<accession>Q14AV2</accession>
<gene>
    <name type="primary">Sh2d4a</name>
</gene>
<proteinExistence type="evidence at protein level"/>
<name>SH24A_MOUSE</name>
<organism>
    <name type="scientific">Mus musculus</name>
    <name type="common">Mouse</name>
    <dbReference type="NCBI Taxonomy" id="10090"/>
    <lineage>
        <taxon>Eukaryota</taxon>
        <taxon>Metazoa</taxon>
        <taxon>Chordata</taxon>
        <taxon>Craniata</taxon>
        <taxon>Vertebrata</taxon>
        <taxon>Euteleostomi</taxon>
        <taxon>Mammalia</taxon>
        <taxon>Eutheria</taxon>
        <taxon>Euarchontoglires</taxon>
        <taxon>Glires</taxon>
        <taxon>Rodentia</taxon>
        <taxon>Myomorpha</taxon>
        <taxon>Muroidea</taxon>
        <taxon>Muridae</taxon>
        <taxon>Murinae</taxon>
        <taxon>Mus</taxon>
        <taxon>Mus</taxon>
    </lineage>
</organism>
<keyword id="KW-0963">Cytoplasm</keyword>
<keyword id="KW-0597">Phosphoprotein</keyword>
<keyword id="KW-1185">Reference proteome</keyword>
<keyword id="KW-0727">SH2 domain</keyword>